<name>Y05O_BPT4</name>
<sequence length="128" mass="14648">MKFSDFSQSGKPSKADEYLGLLMAAQAYFHSAHFETKSYARHKAYDFIFSELPDLIDKFGEQYLGYSGRKYTPSIPDASKLPTDTIKMIDRILDQSNSIYKEMPPAIQSTIDDITGMFYQSKYLLSLE</sequence>
<reference key="1">
    <citation type="submission" date="1996-11" db="EMBL/GenBank/DDBJ databases">
        <title>The 10.7 kb 'nonessential' region of bacteriophage T4 between the genes tk and nrdC: twenty new t4 genes, generally conserved among T-even phages.</title>
        <authorList>
            <person name="Mzhavia N."/>
            <person name="Marusich E."/>
            <person name="Djavakhishvili T."/>
            <person name="Neitzel J."/>
            <person name="Peterson S."/>
            <person name="Awaya M."/>
            <person name="Eidermiller J."/>
            <person name="Canada D."/>
            <person name="Tracy J."/>
            <person name="Gailbreath K."/>
            <person name="Paddison P."/>
            <person name="Anderson B."/>
            <person name="Stidham T."/>
            <person name="Blattner F."/>
            <person name="Kutter E.M."/>
        </authorList>
    </citation>
    <scope>NUCLEOTIDE SEQUENCE [GENOMIC DNA]</scope>
</reference>
<reference key="2">
    <citation type="journal article" date="2003" name="Microbiol. Mol. Biol. Rev.">
        <title>Bacteriophage T4 genome.</title>
        <authorList>
            <person name="Miller E.S."/>
            <person name="Kutter E."/>
            <person name="Mosig G."/>
            <person name="Arisaka F."/>
            <person name="Kunisawa T."/>
            <person name="Ruger W."/>
        </authorList>
    </citation>
    <scope>NUCLEOTIDE SEQUENCE [LARGE SCALE GENOMIC DNA]</scope>
</reference>
<reference key="3">
    <citation type="journal article" date="1986" name="Nucleic Acids Res.">
        <title>Nucleotide sequence and analysis of the 58.3 to 65.5-kb early region of bacteriophage T4.</title>
        <authorList>
            <person name="Valerie K."/>
            <person name="Stevens J."/>
            <person name="Lynch M."/>
            <person name="Henderson E.E."/>
            <person name="de Riel J.K."/>
        </authorList>
    </citation>
    <scope>NUCLEOTIDE SEQUENCE [GENOMIC DNA] OF 1-27</scope>
</reference>
<gene>
    <name type="primary">y05O</name>
    <name type="synonym">58.3</name>
    <name type="synonym">mobD.7</name>
    <name type="synonym">rI.-1</name>
    <name type="synonym">tk.-3</name>
</gene>
<organism>
    <name type="scientific">Enterobacteria phage T4</name>
    <name type="common">Bacteriophage T4</name>
    <dbReference type="NCBI Taxonomy" id="10665"/>
    <lineage>
        <taxon>Viruses</taxon>
        <taxon>Duplodnaviria</taxon>
        <taxon>Heunggongvirae</taxon>
        <taxon>Uroviricota</taxon>
        <taxon>Caudoviricetes</taxon>
        <taxon>Straboviridae</taxon>
        <taxon>Tevenvirinae</taxon>
        <taxon>Tequatrovirus</taxon>
    </lineage>
</organism>
<proteinExistence type="predicted"/>
<dbReference type="EMBL" id="U76612">
    <property type="protein sequence ID" value="AAB26963.1"/>
    <property type="molecule type" value="Genomic_DNA"/>
</dbReference>
<dbReference type="EMBL" id="AF158101">
    <property type="protein sequence ID" value="AAD42598.1"/>
    <property type="molecule type" value="Genomic_DNA"/>
</dbReference>
<dbReference type="EMBL" id="X04567">
    <property type="protein sequence ID" value="CAA28237.1"/>
    <property type="molecule type" value="Genomic_DNA"/>
</dbReference>
<dbReference type="RefSeq" id="NP_049716.1">
    <property type="nucleotide sequence ID" value="NC_000866.4"/>
</dbReference>
<dbReference type="SMR" id="P13303"/>
<dbReference type="GeneID" id="1258569"/>
<dbReference type="KEGG" id="vg:1258569"/>
<dbReference type="OrthoDB" id="14910at10239"/>
<dbReference type="Proteomes" id="UP000009087">
    <property type="component" value="Segment"/>
</dbReference>
<dbReference type="InterPro" id="IPR043876">
    <property type="entry name" value="DUF5856"/>
</dbReference>
<dbReference type="Pfam" id="PF19174">
    <property type="entry name" value="DUF5856"/>
    <property type="match status" value="1"/>
</dbReference>
<feature type="chain" id="PRO_0000165131" description="Uncharacterized 14.6 kDa protein in mobD-ri intergenic region">
    <location>
        <begin position="1"/>
        <end position="128"/>
    </location>
</feature>
<keyword id="KW-1185">Reference proteome</keyword>
<organismHost>
    <name type="scientific">Escherichia coli</name>
    <dbReference type="NCBI Taxonomy" id="562"/>
</organismHost>
<protein>
    <recommendedName>
        <fullName>Uncharacterized 14.6 kDa protein in mobD-ri intergenic region</fullName>
    </recommendedName>
</protein>
<accession>P13303</accession>
<accession>P39235</accession>
<accession>Q96212</accession>